<gene>
    <name evidence="1" type="primary">rplX</name>
    <name evidence="1" type="synonym">rpl24</name>
    <name type="ordered locus">A9601_17541</name>
</gene>
<organism>
    <name type="scientific">Prochlorococcus marinus (strain AS9601)</name>
    <dbReference type="NCBI Taxonomy" id="146891"/>
    <lineage>
        <taxon>Bacteria</taxon>
        <taxon>Bacillati</taxon>
        <taxon>Cyanobacteriota</taxon>
        <taxon>Cyanophyceae</taxon>
        <taxon>Synechococcales</taxon>
        <taxon>Prochlorococcaceae</taxon>
        <taxon>Prochlorococcus</taxon>
    </lineage>
</organism>
<evidence type="ECO:0000255" key="1">
    <source>
        <dbReference type="HAMAP-Rule" id="MF_01326"/>
    </source>
</evidence>
<evidence type="ECO:0000305" key="2"/>
<accession>A2BTC6</accession>
<sequence length="118" mass="13481">MLDSLKQKKNFQRIKMRIKTGDLVKVINGKDKGKTGEVLKTIPLENRVVVKGINLRTKHVKPTQEGETGRILTEEASLHASNVMFFSKDKNLTSKIEYFIDKEGVKKRRLKKTGEVID</sequence>
<protein>
    <recommendedName>
        <fullName evidence="1">Large ribosomal subunit protein uL24</fullName>
    </recommendedName>
    <alternativeName>
        <fullName evidence="2">50S ribosomal protein L24</fullName>
    </alternativeName>
</protein>
<reference key="1">
    <citation type="journal article" date="2007" name="PLoS Genet.">
        <title>Patterns and implications of gene gain and loss in the evolution of Prochlorococcus.</title>
        <authorList>
            <person name="Kettler G.C."/>
            <person name="Martiny A.C."/>
            <person name="Huang K."/>
            <person name="Zucker J."/>
            <person name="Coleman M.L."/>
            <person name="Rodrigue S."/>
            <person name="Chen F."/>
            <person name="Lapidus A."/>
            <person name="Ferriera S."/>
            <person name="Johnson J."/>
            <person name="Steglich C."/>
            <person name="Church G.M."/>
            <person name="Richardson P."/>
            <person name="Chisholm S.W."/>
        </authorList>
    </citation>
    <scope>NUCLEOTIDE SEQUENCE [LARGE SCALE GENOMIC DNA]</scope>
    <source>
        <strain>AS9601</strain>
    </source>
</reference>
<feature type="chain" id="PRO_0000355706" description="Large ribosomal subunit protein uL24">
    <location>
        <begin position="1"/>
        <end position="118"/>
    </location>
</feature>
<comment type="function">
    <text evidence="1">One of two assembly initiator proteins, it binds directly to the 5'-end of the 23S rRNA, where it nucleates assembly of the 50S subunit.</text>
</comment>
<comment type="function">
    <text evidence="1">One of the proteins that surrounds the polypeptide exit tunnel on the outside of the subunit.</text>
</comment>
<comment type="subunit">
    <text evidence="1">Part of the 50S ribosomal subunit.</text>
</comment>
<comment type="similarity">
    <text evidence="1">Belongs to the universal ribosomal protein uL24 family.</text>
</comment>
<keyword id="KW-0687">Ribonucleoprotein</keyword>
<keyword id="KW-0689">Ribosomal protein</keyword>
<keyword id="KW-0694">RNA-binding</keyword>
<keyword id="KW-0699">rRNA-binding</keyword>
<dbReference type="EMBL" id="CP000551">
    <property type="protein sequence ID" value="ABM71037.1"/>
    <property type="molecule type" value="Genomic_DNA"/>
</dbReference>
<dbReference type="RefSeq" id="WP_011819161.1">
    <property type="nucleotide sequence ID" value="NC_008816.1"/>
</dbReference>
<dbReference type="SMR" id="A2BTC6"/>
<dbReference type="STRING" id="146891.A9601_17541"/>
<dbReference type="KEGG" id="pmb:A9601_17541"/>
<dbReference type="eggNOG" id="COG0198">
    <property type="taxonomic scope" value="Bacteria"/>
</dbReference>
<dbReference type="HOGENOM" id="CLU_093315_2_0_3"/>
<dbReference type="OrthoDB" id="9807419at2"/>
<dbReference type="Proteomes" id="UP000002590">
    <property type="component" value="Chromosome"/>
</dbReference>
<dbReference type="GO" id="GO:1990904">
    <property type="term" value="C:ribonucleoprotein complex"/>
    <property type="evidence" value="ECO:0007669"/>
    <property type="project" value="UniProtKB-KW"/>
</dbReference>
<dbReference type="GO" id="GO:0005840">
    <property type="term" value="C:ribosome"/>
    <property type="evidence" value="ECO:0007669"/>
    <property type="project" value="UniProtKB-KW"/>
</dbReference>
<dbReference type="GO" id="GO:0019843">
    <property type="term" value="F:rRNA binding"/>
    <property type="evidence" value="ECO:0007669"/>
    <property type="project" value="UniProtKB-UniRule"/>
</dbReference>
<dbReference type="GO" id="GO:0003735">
    <property type="term" value="F:structural constituent of ribosome"/>
    <property type="evidence" value="ECO:0007669"/>
    <property type="project" value="InterPro"/>
</dbReference>
<dbReference type="GO" id="GO:0006412">
    <property type="term" value="P:translation"/>
    <property type="evidence" value="ECO:0007669"/>
    <property type="project" value="UniProtKB-UniRule"/>
</dbReference>
<dbReference type="CDD" id="cd06089">
    <property type="entry name" value="KOW_RPL26"/>
    <property type="match status" value="1"/>
</dbReference>
<dbReference type="Gene3D" id="2.30.30.30">
    <property type="match status" value="1"/>
</dbReference>
<dbReference type="HAMAP" id="MF_01326_B">
    <property type="entry name" value="Ribosomal_uL24_B"/>
    <property type="match status" value="1"/>
</dbReference>
<dbReference type="InterPro" id="IPR005824">
    <property type="entry name" value="KOW"/>
</dbReference>
<dbReference type="InterPro" id="IPR014722">
    <property type="entry name" value="Rib_uL2_dom2"/>
</dbReference>
<dbReference type="InterPro" id="IPR003256">
    <property type="entry name" value="Ribosomal_uL24"/>
</dbReference>
<dbReference type="InterPro" id="IPR005825">
    <property type="entry name" value="Ribosomal_uL24_CS"/>
</dbReference>
<dbReference type="InterPro" id="IPR041988">
    <property type="entry name" value="Ribosomal_uL24_KOW"/>
</dbReference>
<dbReference type="InterPro" id="IPR008991">
    <property type="entry name" value="Translation_prot_SH3-like_sf"/>
</dbReference>
<dbReference type="NCBIfam" id="TIGR01079">
    <property type="entry name" value="rplX_bact"/>
    <property type="match status" value="1"/>
</dbReference>
<dbReference type="PANTHER" id="PTHR12903">
    <property type="entry name" value="MITOCHONDRIAL RIBOSOMAL PROTEIN L24"/>
    <property type="match status" value="1"/>
</dbReference>
<dbReference type="Pfam" id="PF00467">
    <property type="entry name" value="KOW"/>
    <property type="match status" value="1"/>
</dbReference>
<dbReference type="Pfam" id="PF17136">
    <property type="entry name" value="ribosomal_L24"/>
    <property type="match status" value="1"/>
</dbReference>
<dbReference type="SMART" id="SM00739">
    <property type="entry name" value="KOW"/>
    <property type="match status" value="1"/>
</dbReference>
<dbReference type="SUPFAM" id="SSF50104">
    <property type="entry name" value="Translation proteins SH3-like domain"/>
    <property type="match status" value="1"/>
</dbReference>
<dbReference type="PROSITE" id="PS01108">
    <property type="entry name" value="RIBOSOMAL_L24"/>
    <property type="match status" value="1"/>
</dbReference>
<proteinExistence type="inferred from homology"/>
<name>RL24_PROMS</name>